<accession>B1IUB8</accession>
<name>YMGG_ECOLC</name>
<organism>
    <name type="scientific">Escherichia coli (strain ATCC 8739 / DSM 1576 / NBRC 3972 / NCIMB 8545 / WDCM 00012 / Crooks)</name>
    <dbReference type="NCBI Taxonomy" id="481805"/>
    <lineage>
        <taxon>Bacteria</taxon>
        <taxon>Pseudomonadati</taxon>
        <taxon>Pseudomonadota</taxon>
        <taxon>Gammaproteobacteria</taxon>
        <taxon>Enterobacterales</taxon>
        <taxon>Enterobacteriaceae</taxon>
        <taxon>Escherichia</taxon>
    </lineage>
</organism>
<comment type="similarity">
    <text evidence="1">Belongs to the UPF0757 family.</text>
</comment>
<comment type="sequence caution" evidence="2">
    <conflict type="erroneous initiation">
        <sequence resource="EMBL-CDS" id="ACA78085"/>
    </conflict>
    <text>Truncated N-terminus.</text>
</comment>
<comment type="sequence caution" evidence="2">
    <conflict type="erroneous termination">
        <sequence resource="EMBL-CDS" id="ACA78085"/>
    </conflict>
    <text>Truncated C-terminus.</text>
</comment>
<feature type="chain" id="PRO_0000388947" description="UPF0757 protein YmgG">
    <location>
        <begin position="1"/>
        <end position="114"/>
    </location>
</feature>
<proteinExistence type="inferred from homology"/>
<dbReference type="EMBL" id="CP000946">
    <property type="protein sequence ID" value="ACA78085.1"/>
    <property type="status" value="ALT_SEQ"/>
    <property type="molecule type" value="Genomic_DNA"/>
</dbReference>
<dbReference type="RefSeq" id="WP_000726974.1">
    <property type="nucleotide sequence ID" value="NZ_CP043852.1"/>
</dbReference>
<dbReference type="KEGG" id="ecl:EcolC_2453"/>
<dbReference type="HOGENOM" id="CLU_164687_0_0_6"/>
<dbReference type="HAMAP" id="MF_01455">
    <property type="entry name" value="UPF0757"/>
    <property type="match status" value="1"/>
</dbReference>
<dbReference type="InterPro" id="IPR025693">
    <property type="entry name" value="Gly-zipper_OmpA-like_dom"/>
</dbReference>
<dbReference type="InterPro" id="IPR027367">
    <property type="entry name" value="Gly-zipper_YMGG"/>
</dbReference>
<dbReference type="InterPro" id="IPR022833">
    <property type="entry name" value="UPF0757_YmgG"/>
</dbReference>
<dbReference type="Pfam" id="PF13436">
    <property type="entry name" value="Gly-zipper_OmpA"/>
    <property type="match status" value="1"/>
</dbReference>
<dbReference type="Pfam" id="PF13441">
    <property type="entry name" value="Gly-zipper_YMGG"/>
    <property type="match status" value="1"/>
</dbReference>
<sequence length="114" mass="10807">MKKKILAFGLISALFCSTPAMADMNRTTKGALLGAGVGLLTGNGVNGVLKGAAVGAGVGAVTEKGRDGKNARKGAKVGAAVGAVTGVLTGNGLEGAIKGAVIGGTGGAILGKMK</sequence>
<reference key="1">
    <citation type="submission" date="2008-02" db="EMBL/GenBank/DDBJ databases">
        <title>Complete sequence of Escherichia coli C str. ATCC 8739.</title>
        <authorList>
            <person name="Copeland A."/>
            <person name="Lucas S."/>
            <person name="Lapidus A."/>
            <person name="Glavina del Rio T."/>
            <person name="Dalin E."/>
            <person name="Tice H."/>
            <person name="Bruce D."/>
            <person name="Goodwin L."/>
            <person name="Pitluck S."/>
            <person name="Kiss H."/>
            <person name="Brettin T."/>
            <person name="Detter J.C."/>
            <person name="Han C."/>
            <person name="Kuske C.R."/>
            <person name="Schmutz J."/>
            <person name="Larimer F."/>
            <person name="Land M."/>
            <person name="Hauser L."/>
            <person name="Kyrpides N."/>
            <person name="Mikhailova N."/>
            <person name="Ingram L."/>
            <person name="Richardson P."/>
        </authorList>
    </citation>
    <scope>NUCLEOTIDE SEQUENCE [LARGE SCALE GENOMIC DNA]</scope>
    <source>
        <strain>ATCC 8739 / DSM 1576 / NBRC 3972 / NCIMB 8545 / WDCM 00012 / Crooks</strain>
    </source>
</reference>
<gene>
    <name evidence="1" type="primary">ymgG</name>
    <name type="ordered locus">EcolC_2453</name>
</gene>
<evidence type="ECO:0000255" key="1">
    <source>
        <dbReference type="HAMAP-Rule" id="MF_01455"/>
    </source>
</evidence>
<evidence type="ECO:0000305" key="2"/>
<protein>
    <recommendedName>
        <fullName evidence="1">UPF0757 protein YmgG</fullName>
    </recommendedName>
</protein>